<name>COAX_DEIRA</name>
<reference key="1">
    <citation type="journal article" date="1999" name="Science">
        <title>Genome sequence of the radioresistant bacterium Deinococcus radiodurans R1.</title>
        <authorList>
            <person name="White O."/>
            <person name="Eisen J.A."/>
            <person name="Heidelberg J.F."/>
            <person name="Hickey E.K."/>
            <person name="Peterson J.D."/>
            <person name="Dodson R.J."/>
            <person name="Haft D.H."/>
            <person name="Gwinn M.L."/>
            <person name="Nelson W.C."/>
            <person name="Richardson D.L."/>
            <person name="Moffat K.S."/>
            <person name="Qin H."/>
            <person name="Jiang L."/>
            <person name="Pamphile W."/>
            <person name="Crosby M."/>
            <person name="Shen M."/>
            <person name="Vamathevan J.J."/>
            <person name="Lam P."/>
            <person name="McDonald L.A."/>
            <person name="Utterback T.R."/>
            <person name="Zalewski C."/>
            <person name="Makarova K.S."/>
            <person name="Aravind L."/>
            <person name="Daly M.J."/>
            <person name="Minton K.W."/>
            <person name="Fleischmann R.D."/>
            <person name="Ketchum K.A."/>
            <person name="Nelson K.E."/>
            <person name="Salzberg S.L."/>
            <person name="Smith H.O."/>
            <person name="Venter J.C."/>
            <person name="Fraser C.M."/>
        </authorList>
    </citation>
    <scope>NUCLEOTIDE SEQUENCE [LARGE SCALE GENOMIC DNA]</scope>
    <source>
        <strain>ATCC 13939 / DSM 20539 / JCM 16871 / CCUG 27074 / LMG 4051 / NBRC 15346 / NCIMB 9279 / VKM B-1422 / R1</strain>
    </source>
</reference>
<sequence length="262" mass="27839">MPAFPLLAVDIGNTTTVLGLADASGALTHTWRIRTNREMLPDDLALQLHGLFTLAGAPIPRAAVLSSVAPPVGENYALALKRHFMIDAFAVSAENLPDVTVELDTPGSVGADRLCNLFGAEKYLGGLDYAVVVDFGTSTNFDVVGRGRRFLGGILATGAQVSADALFARAAKLPRITLQAPETAIGKNTVHALQSGLVFGYAEMVDGLLRRIRAELPGEAVAVATGGFSRTVQGICQEIDYYDETLTLRGLVELWASRSEVR</sequence>
<dbReference type="EC" id="2.7.1.33" evidence="1"/>
<dbReference type="EMBL" id="AE000513">
    <property type="protein sequence ID" value="AAF10040.1"/>
    <property type="molecule type" value="Genomic_DNA"/>
</dbReference>
<dbReference type="PIR" id="E75516">
    <property type="entry name" value="E75516"/>
</dbReference>
<dbReference type="RefSeq" id="NP_294184.1">
    <property type="nucleotide sequence ID" value="NC_001263.1"/>
</dbReference>
<dbReference type="RefSeq" id="WP_010887106.1">
    <property type="nucleotide sequence ID" value="NC_001263.1"/>
</dbReference>
<dbReference type="SMR" id="Q9RX54"/>
<dbReference type="FunCoup" id="Q9RX54">
    <property type="interactions" value="364"/>
</dbReference>
<dbReference type="STRING" id="243230.DR_0461"/>
<dbReference type="PaxDb" id="243230-DR_0461"/>
<dbReference type="EnsemblBacteria" id="AAF10040">
    <property type="protein sequence ID" value="AAF10040"/>
    <property type="gene ID" value="DR_0461"/>
</dbReference>
<dbReference type="GeneID" id="69516697"/>
<dbReference type="KEGG" id="dra:DR_0461"/>
<dbReference type="PATRIC" id="fig|243230.17.peg.638"/>
<dbReference type="eggNOG" id="COG1521">
    <property type="taxonomic scope" value="Bacteria"/>
</dbReference>
<dbReference type="HOGENOM" id="CLU_066627_1_0_0"/>
<dbReference type="InParanoid" id="Q9RX54"/>
<dbReference type="OrthoDB" id="9804707at2"/>
<dbReference type="UniPathway" id="UPA00241">
    <property type="reaction ID" value="UER00352"/>
</dbReference>
<dbReference type="Proteomes" id="UP000002524">
    <property type="component" value="Chromosome 1"/>
</dbReference>
<dbReference type="GO" id="GO:0005737">
    <property type="term" value="C:cytoplasm"/>
    <property type="evidence" value="ECO:0007669"/>
    <property type="project" value="UniProtKB-SubCell"/>
</dbReference>
<dbReference type="GO" id="GO:0005524">
    <property type="term" value="F:ATP binding"/>
    <property type="evidence" value="ECO:0007669"/>
    <property type="project" value="UniProtKB-UniRule"/>
</dbReference>
<dbReference type="GO" id="GO:0046872">
    <property type="term" value="F:metal ion binding"/>
    <property type="evidence" value="ECO:0007669"/>
    <property type="project" value="UniProtKB-KW"/>
</dbReference>
<dbReference type="GO" id="GO:0004594">
    <property type="term" value="F:pantothenate kinase activity"/>
    <property type="evidence" value="ECO:0007669"/>
    <property type="project" value="UniProtKB-UniRule"/>
</dbReference>
<dbReference type="GO" id="GO:0015937">
    <property type="term" value="P:coenzyme A biosynthetic process"/>
    <property type="evidence" value="ECO:0007669"/>
    <property type="project" value="UniProtKB-UniRule"/>
</dbReference>
<dbReference type="CDD" id="cd24015">
    <property type="entry name" value="ASKHA_NBD_PanK-III"/>
    <property type="match status" value="1"/>
</dbReference>
<dbReference type="Gene3D" id="3.30.420.40">
    <property type="match status" value="2"/>
</dbReference>
<dbReference type="HAMAP" id="MF_01274">
    <property type="entry name" value="Pantothen_kinase_3"/>
    <property type="match status" value="1"/>
</dbReference>
<dbReference type="InterPro" id="IPR043129">
    <property type="entry name" value="ATPase_NBD"/>
</dbReference>
<dbReference type="InterPro" id="IPR004619">
    <property type="entry name" value="Type_III_PanK"/>
</dbReference>
<dbReference type="NCBIfam" id="TIGR00671">
    <property type="entry name" value="baf"/>
    <property type="match status" value="1"/>
</dbReference>
<dbReference type="NCBIfam" id="NF009848">
    <property type="entry name" value="PRK13318.1-6"/>
    <property type="match status" value="1"/>
</dbReference>
<dbReference type="PANTHER" id="PTHR34265">
    <property type="entry name" value="TYPE III PANTOTHENATE KINASE"/>
    <property type="match status" value="1"/>
</dbReference>
<dbReference type="PANTHER" id="PTHR34265:SF1">
    <property type="entry name" value="TYPE III PANTOTHENATE KINASE"/>
    <property type="match status" value="1"/>
</dbReference>
<dbReference type="Pfam" id="PF03309">
    <property type="entry name" value="Pan_kinase"/>
    <property type="match status" value="1"/>
</dbReference>
<dbReference type="SUPFAM" id="SSF53067">
    <property type="entry name" value="Actin-like ATPase domain"/>
    <property type="match status" value="2"/>
</dbReference>
<comment type="function">
    <text evidence="1">Catalyzes the phosphorylation of pantothenate (Pan), the first step in CoA biosynthesis.</text>
</comment>
<comment type="catalytic activity">
    <reaction evidence="1">
        <text>(R)-pantothenate + ATP = (R)-4'-phosphopantothenate + ADP + H(+)</text>
        <dbReference type="Rhea" id="RHEA:16373"/>
        <dbReference type="ChEBI" id="CHEBI:10986"/>
        <dbReference type="ChEBI" id="CHEBI:15378"/>
        <dbReference type="ChEBI" id="CHEBI:29032"/>
        <dbReference type="ChEBI" id="CHEBI:30616"/>
        <dbReference type="ChEBI" id="CHEBI:456216"/>
        <dbReference type="EC" id="2.7.1.33"/>
    </reaction>
</comment>
<comment type="cofactor">
    <cofactor evidence="1">
        <name>NH4(+)</name>
        <dbReference type="ChEBI" id="CHEBI:28938"/>
    </cofactor>
    <cofactor evidence="1">
        <name>K(+)</name>
        <dbReference type="ChEBI" id="CHEBI:29103"/>
    </cofactor>
    <text evidence="1">A monovalent cation. Ammonium or potassium.</text>
</comment>
<comment type="pathway">
    <text evidence="1">Cofactor biosynthesis; coenzyme A biosynthesis; CoA from (R)-pantothenate: step 1/5.</text>
</comment>
<comment type="subunit">
    <text evidence="1">Homodimer.</text>
</comment>
<comment type="subcellular location">
    <subcellularLocation>
        <location evidence="1">Cytoplasm</location>
    </subcellularLocation>
</comment>
<comment type="similarity">
    <text evidence="1">Belongs to the type III pantothenate kinase family.</text>
</comment>
<organism>
    <name type="scientific">Deinococcus radiodurans (strain ATCC 13939 / DSM 20539 / JCM 16871 / CCUG 27074 / LMG 4051 / NBRC 15346 / NCIMB 9279 / VKM B-1422 / R1)</name>
    <dbReference type="NCBI Taxonomy" id="243230"/>
    <lineage>
        <taxon>Bacteria</taxon>
        <taxon>Thermotogati</taxon>
        <taxon>Deinococcota</taxon>
        <taxon>Deinococci</taxon>
        <taxon>Deinococcales</taxon>
        <taxon>Deinococcaceae</taxon>
        <taxon>Deinococcus</taxon>
    </lineage>
</organism>
<keyword id="KW-0067">ATP-binding</keyword>
<keyword id="KW-0173">Coenzyme A biosynthesis</keyword>
<keyword id="KW-0963">Cytoplasm</keyword>
<keyword id="KW-0418">Kinase</keyword>
<keyword id="KW-0479">Metal-binding</keyword>
<keyword id="KW-0547">Nucleotide-binding</keyword>
<keyword id="KW-0630">Potassium</keyword>
<keyword id="KW-1185">Reference proteome</keyword>
<keyword id="KW-0808">Transferase</keyword>
<protein>
    <recommendedName>
        <fullName evidence="1">Type III pantothenate kinase</fullName>
        <ecNumber evidence="1">2.7.1.33</ecNumber>
    </recommendedName>
    <alternativeName>
        <fullName evidence="1">PanK-III</fullName>
    </alternativeName>
    <alternativeName>
        <fullName evidence="1">Pantothenic acid kinase</fullName>
    </alternativeName>
</protein>
<accession>Q9RX54</accession>
<gene>
    <name evidence="1" type="primary">coaX</name>
    <name type="ordered locus">DR_0461</name>
</gene>
<evidence type="ECO:0000255" key="1">
    <source>
        <dbReference type="HAMAP-Rule" id="MF_01274"/>
    </source>
</evidence>
<proteinExistence type="inferred from homology"/>
<feature type="chain" id="PRO_0000267520" description="Type III pantothenate kinase">
    <location>
        <begin position="1"/>
        <end position="262"/>
    </location>
</feature>
<feature type="active site" description="Proton acceptor" evidence="1">
    <location>
        <position position="112"/>
    </location>
</feature>
<feature type="binding site" evidence="1">
    <location>
        <begin position="10"/>
        <end position="17"/>
    </location>
    <ligand>
        <name>ATP</name>
        <dbReference type="ChEBI" id="CHEBI:30616"/>
    </ligand>
</feature>
<feature type="binding site" evidence="1">
    <location>
        <begin position="110"/>
        <end position="113"/>
    </location>
    <ligand>
        <name>substrate</name>
    </ligand>
</feature>
<feature type="binding site" evidence="1">
    <location>
        <position position="134"/>
    </location>
    <ligand>
        <name>K(+)</name>
        <dbReference type="ChEBI" id="CHEBI:29103"/>
    </ligand>
</feature>
<feature type="binding site" evidence="1">
    <location>
        <position position="137"/>
    </location>
    <ligand>
        <name>ATP</name>
        <dbReference type="ChEBI" id="CHEBI:30616"/>
    </ligand>
</feature>
<feature type="binding site" evidence="1">
    <location>
        <position position="189"/>
    </location>
    <ligand>
        <name>substrate</name>
    </ligand>
</feature>